<evidence type="ECO:0000255" key="1">
    <source>
        <dbReference type="HAMAP-Rule" id="MF_00323"/>
    </source>
</evidence>
<accession>Q3K6Y7</accession>
<keyword id="KW-0963">Cytoplasm</keyword>
<keyword id="KW-0350">Heme biosynthesis</keyword>
<keyword id="KW-0408">Iron</keyword>
<keyword id="KW-0456">Lyase</keyword>
<keyword id="KW-0479">Metal-binding</keyword>
<keyword id="KW-0627">Porphyrin biosynthesis</keyword>
<gene>
    <name evidence="1" type="primary">hemH</name>
    <name type="ordered locus">Pfl01_4730</name>
</gene>
<protein>
    <recommendedName>
        <fullName evidence="1">Ferrochelatase</fullName>
        <ecNumber evidence="1">4.98.1.1</ecNumber>
    </recommendedName>
    <alternativeName>
        <fullName evidence="1">Heme synthase</fullName>
    </alternativeName>
    <alternativeName>
        <fullName evidence="1">Protoheme ferro-lyase</fullName>
    </alternativeName>
</protein>
<feature type="chain" id="PRO_1000019350" description="Ferrochelatase">
    <location>
        <begin position="1"/>
        <end position="341"/>
    </location>
</feature>
<feature type="binding site" evidence="1">
    <location>
        <position position="189"/>
    </location>
    <ligand>
        <name>Fe cation</name>
        <dbReference type="ChEBI" id="CHEBI:24875"/>
    </ligand>
</feature>
<feature type="binding site" evidence="1">
    <location>
        <position position="293"/>
    </location>
    <ligand>
        <name>Fe cation</name>
        <dbReference type="ChEBI" id="CHEBI:24875"/>
    </ligand>
</feature>
<reference key="1">
    <citation type="journal article" date="2009" name="Genome Biol.">
        <title>Genomic and genetic analyses of diversity and plant interactions of Pseudomonas fluorescens.</title>
        <authorList>
            <person name="Silby M.W."/>
            <person name="Cerdeno-Tarraga A.M."/>
            <person name="Vernikos G.S."/>
            <person name="Giddens S.R."/>
            <person name="Jackson R.W."/>
            <person name="Preston G.M."/>
            <person name="Zhang X.-X."/>
            <person name="Moon C.D."/>
            <person name="Gehrig S.M."/>
            <person name="Godfrey S.A.C."/>
            <person name="Knight C.G."/>
            <person name="Malone J.G."/>
            <person name="Robinson Z."/>
            <person name="Spiers A.J."/>
            <person name="Harris S."/>
            <person name="Challis G.L."/>
            <person name="Yaxley A.M."/>
            <person name="Harris D."/>
            <person name="Seeger K."/>
            <person name="Murphy L."/>
            <person name="Rutter S."/>
            <person name="Squares R."/>
            <person name="Quail M.A."/>
            <person name="Saunders E."/>
            <person name="Mavromatis K."/>
            <person name="Brettin T.S."/>
            <person name="Bentley S.D."/>
            <person name="Hothersall J."/>
            <person name="Stephens E."/>
            <person name="Thomas C.M."/>
            <person name="Parkhill J."/>
            <person name="Levy S.B."/>
            <person name="Rainey P.B."/>
            <person name="Thomson N.R."/>
        </authorList>
    </citation>
    <scope>NUCLEOTIDE SEQUENCE [LARGE SCALE GENOMIC DNA]</scope>
    <source>
        <strain>Pf0-1</strain>
    </source>
</reference>
<proteinExistence type="inferred from homology"/>
<dbReference type="EC" id="4.98.1.1" evidence="1"/>
<dbReference type="EMBL" id="CP000094">
    <property type="protein sequence ID" value="ABA76467.1"/>
    <property type="molecule type" value="Genomic_DNA"/>
</dbReference>
<dbReference type="RefSeq" id="WP_011335905.1">
    <property type="nucleotide sequence ID" value="NC_007492.2"/>
</dbReference>
<dbReference type="SMR" id="Q3K6Y7"/>
<dbReference type="KEGG" id="pfo:Pfl01_4730"/>
<dbReference type="eggNOG" id="COG0276">
    <property type="taxonomic scope" value="Bacteria"/>
</dbReference>
<dbReference type="HOGENOM" id="CLU_018884_0_1_6"/>
<dbReference type="UniPathway" id="UPA00252">
    <property type="reaction ID" value="UER00325"/>
</dbReference>
<dbReference type="Proteomes" id="UP000002704">
    <property type="component" value="Chromosome"/>
</dbReference>
<dbReference type="GO" id="GO:0005737">
    <property type="term" value="C:cytoplasm"/>
    <property type="evidence" value="ECO:0007669"/>
    <property type="project" value="UniProtKB-SubCell"/>
</dbReference>
<dbReference type="GO" id="GO:0004325">
    <property type="term" value="F:ferrochelatase activity"/>
    <property type="evidence" value="ECO:0007669"/>
    <property type="project" value="UniProtKB-UniRule"/>
</dbReference>
<dbReference type="GO" id="GO:0046872">
    <property type="term" value="F:metal ion binding"/>
    <property type="evidence" value="ECO:0007669"/>
    <property type="project" value="UniProtKB-KW"/>
</dbReference>
<dbReference type="GO" id="GO:0006783">
    <property type="term" value="P:heme biosynthetic process"/>
    <property type="evidence" value="ECO:0007669"/>
    <property type="project" value="UniProtKB-UniRule"/>
</dbReference>
<dbReference type="CDD" id="cd00419">
    <property type="entry name" value="Ferrochelatase_C"/>
    <property type="match status" value="1"/>
</dbReference>
<dbReference type="CDD" id="cd03411">
    <property type="entry name" value="Ferrochelatase_N"/>
    <property type="match status" value="1"/>
</dbReference>
<dbReference type="Gene3D" id="3.40.50.1400">
    <property type="match status" value="2"/>
</dbReference>
<dbReference type="HAMAP" id="MF_00323">
    <property type="entry name" value="Ferrochelatase"/>
    <property type="match status" value="1"/>
</dbReference>
<dbReference type="InterPro" id="IPR001015">
    <property type="entry name" value="Ferrochelatase"/>
</dbReference>
<dbReference type="InterPro" id="IPR033644">
    <property type="entry name" value="Ferrochelatase_C"/>
</dbReference>
<dbReference type="InterPro" id="IPR033659">
    <property type="entry name" value="Ferrochelatase_N"/>
</dbReference>
<dbReference type="NCBIfam" id="TIGR00109">
    <property type="entry name" value="hemH"/>
    <property type="match status" value="1"/>
</dbReference>
<dbReference type="PANTHER" id="PTHR11108">
    <property type="entry name" value="FERROCHELATASE"/>
    <property type="match status" value="1"/>
</dbReference>
<dbReference type="PANTHER" id="PTHR11108:SF1">
    <property type="entry name" value="FERROCHELATASE, MITOCHONDRIAL"/>
    <property type="match status" value="1"/>
</dbReference>
<dbReference type="Pfam" id="PF00762">
    <property type="entry name" value="Ferrochelatase"/>
    <property type="match status" value="1"/>
</dbReference>
<dbReference type="SUPFAM" id="SSF53800">
    <property type="entry name" value="Chelatase"/>
    <property type="match status" value="1"/>
</dbReference>
<name>HEMH_PSEPF</name>
<sequence length="341" mass="38372">MTDHALLLVNLGSPASTSVADVRRYLNQFLMDPYVIDLPWPVRRLLVSLILIKRPEQSAHAYASIWWDEGSPLVVLSRRLQQQMKAQWTHGPVELAMRYGEPSIETNLLKLVAAGHKRITLAPLYPQFADSTTTTVIEEAKRVVREKKLDVQLSVLQPFYDQPEYLDALVASARPHLQQDYDHLLLSFHGLPERHLTKLDPTGNHCFKNEDCCKNASAAVLATCYRAQCLRTAALFAERMGLPDGKWSVSFQSRLGRAKWIEPYTEARLDELAKSGVKKILVMCPAFVADCIETLEEIGDRGKEQFREAGGEELVLVPCLNDDPQWAKALATLCERAPLAL</sequence>
<comment type="function">
    <text evidence="1">Catalyzes the ferrous insertion into protoporphyrin IX.</text>
</comment>
<comment type="catalytic activity">
    <reaction evidence="1">
        <text>heme b + 2 H(+) = protoporphyrin IX + Fe(2+)</text>
        <dbReference type="Rhea" id="RHEA:22584"/>
        <dbReference type="ChEBI" id="CHEBI:15378"/>
        <dbReference type="ChEBI" id="CHEBI:29033"/>
        <dbReference type="ChEBI" id="CHEBI:57306"/>
        <dbReference type="ChEBI" id="CHEBI:60344"/>
        <dbReference type="EC" id="4.98.1.1"/>
    </reaction>
</comment>
<comment type="pathway">
    <text evidence="1">Porphyrin-containing compound metabolism; protoheme biosynthesis; protoheme from protoporphyrin-IX: step 1/1.</text>
</comment>
<comment type="subcellular location">
    <subcellularLocation>
        <location evidence="1">Cytoplasm</location>
    </subcellularLocation>
</comment>
<comment type="similarity">
    <text evidence="1">Belongs to the ferrochelatase family.</text>
</comment>
<organism>
    <name type="scientific">Pseudomonas fluorescens (strain Pf0-1)</name>
    <dbReference type="NCBI Taxonomy" id="205922"/>
    <lineage>
        <taxon>Bacteria</taxon>
        <taxon>Pseudomonadati</taxon>
        <taxon>Pseudomonadota</taxon>
        <taxon>Gammaproteobacteria</taxon>
        <taxon>Pseudomonadales</taxon>
        <taxon>Pseudomonadaceae</taxon>
        <taxon>Pseudomonas</taxon>
    </lineage>
</organism>